<organism>
    <name type="scientific">Bordetella pertussis (strain Tohama I / ATCC BAA-589 / NCTC 13251)</name>
    <dbReference type="NCBI Taxonomy" id="257313"/>
    <lineage>
        <taxon>Bacteria</taxon>
        <taxon>Pseudomonadati</taxon>
        <taxon>Pseudomonadota</taxon>
        <taxon>Betaproteobacteria</taxon>
        <taxon>Burkholderiales</taxon>
        <taxon>Alcaligenaceae</taxon>
        <taxon>Bordetella</taxon>
    </lineage>
</organism>
<accession>Q7VZA1</accession>
<dbReference type="EMBL" id="BX640414">
    <property type="protein sequence ID" value="CAE41323.1"/>
    <property type="molecule type" value="Genomic_DNA"/>
</dbReference>
<dbReference type="RefSeq" id="NP_879813.1">
    <property type="nucleotide sequence ID" value="NC_002929.2"/>
</dbReference>
<dbReference type="RefSeq" id="WP_010930143.1">
    <property type="nucleotide sequence ID" value="NZ_CP039022.1"/>
</dbReference>
<dbReference type="SMR" id="Q7VZA1"/>
<dbReference type="STRING" id="257313.BP1022"/>
<dbReference type="PaxDb" id="257313-BP1022"/>
<dbReference type="GeneID" id="69600946"/>
<dbReference type="KEGG" id="bpe:BP1022"/>
<dbReference type="PATRIC" id="fig|257313.5.peg.1093"/>
<dbReference type="eggNOG" id="ENOG5031P80">
    <property type="taxonomic scope" value="Bacteria"/>
</dbReference>
<dbReference type="HOGENOM" id="CLU_144160_1_0_4"/>
<dbReference type="Proteomes" id="UP000002676">
    <property type="component" value="Chromosome"/>
</dbReference>
<dbReference type="GO" id="GO:0005737">
    <property type="term" value="C:cytoplasm"/>
    <property type="evidence" value="ECO:0007669"/>
    <property type="project" value="UniProtKB-SubCell"/>
</dbReference>
<dbReference type="GO" id="GO:0003677">
    <property type="term" value="F:DNA binding"/>
    <property type="evidence" value="ECO:0007669"/>
    <property type="project" value="UniProtKB-UniRule"/>
</dbReference>
<dbReference type="GO" id="GO:0044780">
    <property type="term" value="P:bacterial-type flagellum assembly"/>
    <property type="evidence" value="ECO:0007669"/>
    <property type="project" value="InterPro"/>
</dbReference>
<dbReference type="GO" id="GO:0045893">
    <property type="term" value="P:positive regulation of DNA-templated transcription"/>
    <property type="evidence" value="ECO:0007669"/>
    <property type="project" value="InterPro"/>
</dbReference>
<dbReference type="GO" id="GO:1902208">
    <property type="term" value="P:regulation of bacterial-type flagellum assembly"/>
    <property type="evidence" value="ECO:0007669"/>
    <property type="project" value="UniProtKB-UniRule"/>
</dbReference>
<dbReference type="Gene3D" id="1.10.4000.10">
    <property type="entry name" value="Flagellar transcriptional activator FlhD"/>
    <property type="match status" value="1"/>
</dbReference>
<dbReference type="HAMAP" id="MF_00725">
    <property type="entry name" value="FlhD"/>
    <property type="match status" value="1"/>
</dbReference>
<dbReference type="InterPro" id="IPR023559">
    <property type="entry name" value="Flagellar_FlhD"/>
</dbReference>
<dbReference type="InterPro" id="IPR036194">
    <property type="entry name" value="FlhD_sf"/>
</dbReference>
<dbReference type="NCBIfam" id="NF002783">
    <property type="entry name" value="PRK02909.1-1"/>
    <property type="match status" value="1"/>
</dbReference>
<dbReference type="Pfam" id="PF05247">
    <property type="entry name" value="FlhD"/>
    <property type="match status" value="1"/>
</dbReference>
<dbReference type="SUPFAM" id="SSF63592">
    <property type="entry name" value="Flagellar transcriptional activator FlhD"/>
    <property type="match status" value="1"/>
</dbReference>
<feature type="chain" id="PRO_0000182712" description="Flagellar transcriptional regulator FlhD">
    <location>
        <begin position="1"/>
        <end position="107"/>
    </location>
</feature>
<feature type="disulfide bond" description="Interchain" evidence="1">
    <location>
        <position position="67"/>
    </location>
</feature>
<sequence length="107" mass="11862">MKTADSSLLADIREVNLSYLLLAQRMLRDDYAASMFRLGFSNEVADILMRLSPAQLVKLANSSSLLCRFRFDDYSLLSALTQDVLGGALQQAHATILLARQPVEELA</sequence>
<proteinExistence type="inferred from homology"/>
<gene>
    <name evidence="1" type="primary">flhD</name>
    <name type="synonym">frlA</name>
    <name type="ordered locus">BP1022</name>
</gene>
<protein>
    <recommendedName>
        <fullName evidence="1">Flagellar transcriptional regulator FlhD</fullName>
    </recommendedName>
</protein>
<evidence type="ECO:0000255" key="1">
    <source>
        <dbReference type="HAMAP-Rule" id="MF_00725"/>
    </source>
</evidence>
<reference key="1">
    <citation type="journal article" date="2003" name="Nat. Genet.">
        <title>Comparative analysis of the genome sequences of Bordetella pertussis, Bordetella parapertussis and Bordetella bronchiseptica.</title>
        <authorList>
            <person name="Parkhill J."/>
            <person name="Sebaihia M."/>
            <person name="Preston A."/>
            <person name="Murphy L.D."/>
            <person name="Thomson N.R."/>
            <person name="Harris D.E."/>
            <person name="Holden M.T.G."/>
            <person name="Churcher C.M."/>
            <person name="Bentley S.D."/>
            <person name="Mungall K.L."/>
            <person name="Cerdeno-Tarraga A.-M."/>
            <person name="Temple L."/>
            <person name="James K.D."/>
            <person name="Harris B."/>
            <person name="Quail M.A."/>
            <person name="Achtman M."/>
            <person name="Atkin R."/>
            <person name="Baker S."/>
            <person name="Basham D."/>
            <person name="Bason N."/>
            <person name="Cherevach I."/>
            <person name="Chillingworth T."/>
            <person name="Collins M."/>
            <person name="Cronin A."/>
            <person name="Davis P."/>
            <person name="Doggett J."/>
            <person name="Feltwell T."/>
            <person name="Goble A."/>
            <person name="Hamlin N."/>
            <person name="Hauser H."/>
            <person name="Holroyd S."/>
            <person name="Jagels K."/>
            <person name="Leather S."/>
            <person name="Moule S."/>
            <person name="Norberczak H."/>
            <person name="O'Neil S."/>
            <person name="Ormond D."/>
            <person name="Price C."/>
            <person name="Rabbinowitsch E."/>
            <person name="Rutter S."/>
            <person name="Sanders M."/>
            <person name="Saunders D."/>
            <person name="Seeger K."/>
            <person name="Sharp S."/>
            <person name="Simmonds M."/>
            <person name="Skelton J."/>
            <person name="Squares R."/>
            <person name="Squares S."/>
            <person name="Stevens K."/>
            <person name="Unwin L."/>
            <person name="Whitehead S."/>
            <person name="Barrell B.G."/>
            <person name="Maskell D.J."/>
        </authorList>
    </citation>
    <scope>NUCLEOTIDE SEQUENCE [LARGE SCALE GENOMIC DNA]</scope>
    <source>
        <strain>Tohama I / ATCC BAA-589 / NCTC 13251</strain>
    </source>
</reference>
<comment type="function">
    <text evidence="1">Functions in complex with FlhC as a master transcriptional regulator that regulates transcription of several flagellar and non-flagellar operons by binding to their promoter region. Activates expression of class 2 flagellar genes, including fliA, which is a flagellum-specific sigma factor that turns on the class 3 genes. Also regulates genes whose products function in a variety of physiological pathways.</text>
</comment>
<comment type="subunit">
    <text evidence="1">Homodimer; disulfide-linked. Forms a heterohexamer composed of two FlhC and four FlhD subunits. Each FlhC binds a FlhD dimer, forming a heterotrimer, and a hexamer assembles by dimerization of two heterotrimers.</text>
</comment>
<comment type="subcellular location">
    <subcellularLocation>
        <location evidence="1">Cytoplasm</location>
    </subcellularLocation>
</comment>
<comment type="domain">
    <text evidence="1">The C-terminal region contains a putative helix-turn-helix (HTH) motif, suggesting that this region may bind DNA.</text>
</comment>
<comment type="similarity">
    <text evidence="1">Belongs to the FlhD family.</text>
</comment>
<name>FLHD_BORPE</name>
<keyword id="KW-0010">Activator</keyword>
<keyword id="KW-1005">Bacterial flagellum biogenesis</keyword>
<keyword id="KW-0963">Cytoplasm</keyword>
<keyword id="KW-1015">Disulfide bond</keyword>
<keyword id="KW-0238">DNA-binding</keyword>
<keyword id="KW-1185">Reference proteome</keyword>
<keyword id="KW-0804">Transcription</keyword>
<keyword id="KW-0805">Transcription regulation</keyword>